<sequence length="292" mass="31162">MFTGSIVALVTPMDENGNVCRTSLKKLIDYHVANGTSAIVSVGTTGESATLSHEEHGDVVMMTLELADGRIPVIAGTGANATAEAISLTKRFNDSGVVGCLTVTPYYNRPTQEGLFQHFKAIAEHTDLPQILYNVPSRTGCDMLPETVGRLAEIKNIVGIKEATGNLSRVHQIKELVSDDFILLSGDDATGMDFMQLGGVGVISVTANVAAREMADMCRLALAGQFAEARAINQRLMPLHTKLFVEPNPIPVKWGCKALGLVATDTLRLPMTPITDHGREAVTAALKHAGLL</sequence>
<protein>
    <recommendedName>
        <fullName evidence="1">4-hydroxy-tetrahydrodipicolinate synthase</fullName>
        <shortName evidence="1">HTPA synthase</shortName>
        <ecNumber evidence="1">4.3.3.7</ecNumber>
    </recommendedName>
</protein>
<proteinExistence type="inferred from homology"/>
<feature type="chain" id="PRO_1000050200" description="4-hydroxy-tetrahydrodipicolinate synthase">
    <location>
        <begin position="1"/>
        <end position="292"/>
    </location>
</feature>
<feature type="active site" description="Proton donor/acceptor" evidence="1">
    <location>
        <position position="133"/>
    </location>
</feature>
<feature type="active site" description="Schiff-base intermediate with substrate" evidence="1">
    <location>
        <position position="161"/>
    </location>
</feature>
<feature type="binding site" evidence="1">
    <location>
        <position position="45"/>
    </location>
    <ligand>
        <name>pyruvate</name>
        <dbReference type="ChEBI" id="CHEBI:15361"/>
    </ligand>
</feature>
<feature type="binding site" evidence="1">
    <location>
        <position position="203"/>
    </location>
    <ligand>
        <name>pyruvate</name>
        <dbReference type="ChEBI" id="CHEBI:15361"/>
    </ligand>
</feature>
<feature type="site" description="Part of a proton relay during catalysis" evidence="1">
    <location>
        <position position="44"/>
    </location>
</feature>
<feature type="site" description="Part of a proton relay during catalysis" evidence="1">
    <location>
        <position position="107"/>
    </location>
</feature>
<name>DAPA_KLEP7</name>
<organism>
    <name type="scientific">Klebsiella pneumoniae subsp. pneumoniae (strain ATCC 700721 / MGH 78578)</name>
    <dbReference type="NCBI Taxonomy" id="272620"/>
    <lineage>
        <taxon>Bacteria</taxon>
        <taxon>Pseudomonadati</taxon>
        <taxon>Pseudomonadota</taxon>
        <taxon>Gammaproteobacteria</taxon>
        <taxon>Enterobacterales</taxon>
        <taxon>Enterobacteriaceae</taxon>
        <taxon>Klebsiella/Raoultella group</taxon>
        <taxon>Klebsiella</taxon>
        <taxon>Klebsiella pneumoniae complex</taxon>
    </lineage>
</organism>
<accession>A6TCA1</accession>
<gene>
    <name evidence="1" type="primary">dapA</name>
    <name type="ordered locus">KPN78578_27610</name>
    <name type="ORF">KPN_02812</name>
</gene>
<comment type="function">
    <text evidence="1">Catalyzes the condensation of (S)-aspartate-beta-semialdehyde [(S)-ASA] and pyruvate to 4-hydroxy-tetrahydrodipicolinate (HTPA).</text>
</comment>
<comment type="catalytic activity">
    <reaction evidence="1">
        <text>L-aspartate 4-semialdehyde + pyruvate = (2S,4S)-4-hydroxy-2,3,4,5-tetrahydrodipicolinate + H2O + H(+)</text>
        <dbReference type="Rhea" id="RHEA:34171"/>
        <dbReference type="ChEBI" id="CHEBI:15361"/>
        <dbReference type="ChEBI" id="CHEBI:15377"/>
        <dbReference type="ChEBI" id="CHEBI:15378"/>
        <dbReference type="ChEBI" id="CHEBI:67139"/>
        <dbReference type="ChEBI" id="CHEBI:537519"/>
        <dbReference type="EC" id="4.3.3.7"/>
    </reaction>
</comment>
<comment type="pathway">
    <text evidence="1">Amino-acid biosynthesis; L-lysine biosynthesis via DAP pathway; (S)-tetrahydrodipicolinate from L-aspartate: step 3/4.</text>
</comment>
<comment type="subunit">
    <text evidence="1">Homotetramer; dimer of dimers.</text>
</comment>
<comment type="subcellular location">
    <subcellularLocation>
        <location evidence="1">Cytoplasm</location>
    </subcellularLocation>
</comment>
<comment type="similarity">
    <text evidence="1">Belongs to the DapA family.</text>
</comment>
<comment type="caution">
    <text evidence="2">Was originally thought to be a dihydrodipicolinate synthase (DHDPS), catalyzing the condensation of (S)-aspartate-beta-semialdehyde [(S)-ASA] and pyruvate to dihydrodipicolinate (DHDP). However, it was shown in E.coli that the product of the enzymatic reaction is not dihydrodipicolinate but in fact (4S)-4-hydroxy-2,3,4,5-tetrahydro-(2S)-dipicolinic acid (HTPA), and that the consecutive dehydration reaction leading to DHDP is not spontaneous but catalyzed by DapB.</text>
</comment>
<reference key="1">
    <citation type="submission" date="2006-09" db="EMBL/GenBank/DDBJ databases">
        <authorList>
            <consortium name="The Klebsiella pneumonia Genome Sequencing Project"/>
            <person name="McClelland M."/>
            <person name="Sanderson E.K."/>
            <person name="Spieth J."/>
            <person name="Clifton W.S."/>
            <person name="Latreille P."/>
            <person name="Sabo A."/>
            <person name="Pepin K."/>
            <person name="Bhonagiri V."/>
            <person name="Porwollik S."/>
            <person name="Ali J."/>
            <person name="Wilson R.K."/>
        </authorList>
    </citation>
    <scope>NUCLEOTIDE SEQUENCE [LARGE SCALE GENOMIC DNA]</scope>
    <source>
        <strain>ATCC 700721 / MGH 78578</strain>
    </source>
</reference>
<evidence type="ECO:0000255" key="1">
    <source>
        <dbReference type="HAMAP-Rule" id="MF_00418"/>
    </source>
</evidence>
<evidence type="ECO:0000305" key="2"/>
<dbReference type="EC" id="4.3.3.7" evidence="1"/>
<dbReference type="EMBL" id="CP000647">
    <property type="protein sequence ID" value="ABR78222.1"/>
    <property type="molecule type" value="Genomic_DNA"/>
</dbReference>
<dbReference type="RefSeq" id="WP_002913803.1">
    <property type="nucleotide sequence ID" value="NC_009648.1"/>
</dbReference>
<dbReference type="SMR" id="A6TCA1"/>
<dbReference type="STRING" id="272620.KPN_02812"/>
<dbReference type="jPOST" id="A6TCA1"/>
<dbReference type="PaxDb" id="272620-KPN_02812"/>
<dbReference type="EnsemblBacteria" id="ABR78222">
    <property type="protein sequence ID" value="ABR78222"/>
    <property type="gene ID" value="KPN_02812"/>
</dbReference>
<dbReference type="GeneID" id="93271924"/>
<dbReference type="KEGG" id="kpn:KPN_02812"/>
<dbReference type="HOGENOM" id="CLU_049343_7_1_6"/>
<dbReference type="UniPathway" id="UPA00034">
    <property type="reaction ID" value="UER00017"/>
</dbReference>
<dbReference type="Proteomes" id="UP000000265">
    <property type="component" value="Chromosome"/>
</dbReference>
<dbReference type="GO" id="GO:0005829">
    <property type="term" value="C:cytosol"/>
    <property type="evidence" value="ECO:0007669"/>
    <property type="project" value="TreeGrafter"/>
</dbReference>
<dbReference type="GO" id="GO:0008840">
    <property type="term" value="F:4-hydroxy-tetrahydrodipicolinate synthase activity"/>
    <property type="evidence" value="ECO:0007669"/>
    <property type="project" value="UniProtKB-UniRule"/>
</dbReference>
<dbReference type="GO" id="GO:0019877">
    <property type="term" value="P:diaminopimelate biosynthetic process"/>
    <property type="evidence" value="ECO:0007669"/>
    <property type="project" value="UniProtKB-UniRule"/>
</dbReference>
<dbReference type="GO" id="GO:0009089">
    <property type="term" value="P:lysine biosynthetic process via diaminopimelate"/>
    <property type="evidence" value="ECO:0007669"/>
    <property type="project" value="UniProtKB-UniRule"/>
</dbReference>
<dbReference type="CDD" id="cd00950">
    <property type="entry name" value="DHDPS"/>
    <property type="match status" value="1"/>
</dbReference>
<dbReference type="FunFam" id="3.20.20.70:FF:000046">
    <property type="entry name" value="4-hydroxy-tetrahydrodipicolinate synthase"/>
    <property type="match status" value="1"/>
</dbReference>
<dbReference type="Gene3D" id="3.20.20.70">
    <property type="entry name" value="Aldolase class I"/>
    <property type="match status" value="1"/>
</dbReference>
<dbReference type="HAMAP" id="MF_00418">
    <property type="entry name" value="DapA"/>
    <property type="match status" value="1"/>
</dbReference>
<dbReference type="InterPro" id="IPR013785">
    <property type="entry name" value="Aldolase_TIM"/>
</dbReference>
<dbReference type="InterPro" id="IPR005263">
    <property type="entry name" value="DapA"/>
</dbReference>
<dbReference type="InterPro" id="IPR002220">
    <property type="entry name" value="DapA-like"/>
</dbReference>
<dbReference type="InterPro" id="IPR020625">
    <property type="entry name" value="Schiff_base-form_aldolases_AS"/>
</dbReference>
<dbReference type="InterPro" id="IPR020624">
    <property type="entry name" value="Schiff_base-form_aldolases_CS"/>
</dbReference>
<dbReference type="NCBIfam" id="TIGR00674">
    <property type="entry name" value="dapA"/>
    <property type="match status" value="1"/>
</dbReference>
<dbReference type="PANTHER" id="PTHR12128:SF66">
    <property type="entry name" value="4-HYDROXY-2-OXOGLUTARATE ALDOLASE, MITOCHONDRIAL"/>
    <property type="match status" value="1"/>
</dbReference>
<dbReference type="PANTHER" id="PTHR12128">
    <property type="entry name" value="DIHYDRODIPICOLINATE SYNTHASE"/>
    <property type="match status" value="1"/>
</dbReference>
<dbReference type="Pfam" id="PF00701">
    <property type="entry name" value="DHDPS"/>
    <property type="match status" value="1"/>
</dbReference>
<dbReference type="PIRSF" id="PIRSF001365">
    <property type="entry name" value="DHDPS"/>
    <property type="match status" value="1"/>
</dbReference>
<dbReference type="PRINTS" id="PR00146">
    <property type="entry name" value="DHPICSNTHASE"/>
</dbReference>
<dbReference type="SMART" id="SM01130">
    <property type="entry name" value="DHDPS"/>
    <property type="match status" value="1"/>
</dbReference>
<dbReference type="SUPFAM" id="SSF51569">
    <property type="entry name" value="Aldolase"/>
    <property type="match status" value="1"/>
</dbReference>
<dbReference type="PROSITE" id="PS00665">
    <property type="entry name" value="DHDPS_1"/>
    <property type="match status" value="1"/>
</dbReference>
<dbReference type="PROSITE" id="PS00666">
    <property type="entry name" value="DHDPS_2"/>
    <property type="match status" value="1"/>
</dbReference>
<keyword id="KW-0028">Amino-acid biosynthesis</keyword>
<keyword id="KW-0963">Cytoplasm</keyword>
<keyword id="KW-0220">Diaminopimelate biosynthesis</keyword>
<keyword id="KW-0456">Lyase</keyword>
<keyword id="KW-0457">Lysine biosynthesis</keyword>
<keyword id="KW-0704">Schiff base</keyword>